<proteinExistence type="inferred from homology"/>
<name>PTH_EXIS2</name>
<accession>B1YGP7</accession>
<feature type="chain" id="PRO_1000092941" description="Peptidyl-tRNA hydrolase">
    <location>
        <begin position="1"/>
        <end position="185"/>
    </location>
</feature>
<feature type="active site" description="Proton acceptor" evidence="1">
    <location>
        <position position="19"/>
    </location>
</feature>
<feature type="binding site" evidence="1">
    <location>
        <position position="14"/>
    </location>
    <ligand>
        <name>tRNA</name>
        <dbReference type="ChEBI" id="CHEBI:17843"/>
    </ligand>
</feature>
<feature type="binding site" evidence="1">
    <location>
        <position position="64"/>
    </location>
    <ligand>
        <name>tRNA</name>
        <dbReference type="ChEBI" id="CHEBI:17843"/>
    </ligand>
</feature>
<feature type="binding site" evidence="1">
    <location>
        <position position="66"/>
    </location>
    <ligand>
        <name>tRNA</name>
        <dbReference type="ChEBI" id="CHEBI:17843"/>
    </ligand>
</feature>
<feature type="binding site" evidence="1">
    <location>
        <position position="112"/>
    </location>
    <ligand>
        <name>tRNA</name>
        <dbReference type="ChEBI" id="CHEBI:17843"/>
    </ligand>
</feature>
<feature type="site" description="Discriminates between blocked and unblocked aminoacyl-tRNA" evidence="1">
    <location>
        <position position="9"/>
    </location>
</feature>
<feature type="site" description="Stabilizes the basic form of H active site to accept a proton" evidence="1">
    <location>
        <position position="91"/>
    </location>
</feature>
<organism>
    <name type="scientific">Exiguobacterium sibiricum (strain DSM 17290 / CCUG 55495 / CIP 109462 / JCM 13490 / 255-15)</name>
    <dbReference type="NCBI Taxonomy" id="262543"/>
    <lineage>
        <taxon>Bacteria</taxon>
        <taxon>Bacillati</taxon>
        <taxon>Bacillota</taxon>
        <taxon>Bacilli</taxon>
        <taxon>Bacillales</taxon>
        <taxon>Bacillales Family XII. Incertae Sedis</taxon>
        <taxon>Exiguobacterium</taxon>
    </lineage>
</organism>
<protein>
    <recommendedName>
        <fullName evidence="1">Peptidyl-tRNA hydrolase</fullName>
        <shortName evidence="1">Pth</shortName>
        <ecNumber evidence="1">3.1.1.29</ecNumber>
    </recommendedName>
</protein>
<keyword id="KW-0963">Cytoplasm</keyword>
<keyword id="KW-0378">Hydrolase</keyword>
<keyword id="KW-1185">Reference proteome</keyword>
<keyword id="KW-0694">RNA-binding</keyword>
<keyword id="KW-0820">tRNA-binding</keyword>
<reference key="1">
    <citation type="submission" date="2008-04" db="EMBL/GenBank/DDBJ databases">
        <title>Complete sequence of chromosome of Exiguobacterium sibiricum 255-15.</title>
        <authorList>
            <consortium name="US DOE Joint Genome Institute"/>
            <person name="Copeland A."/>
            <person name="Lucas S."/>
            <person name="Lapidus A."/>
            <person name="Glavina del Rio T."/>
            <person name="Dalin E."/>
            <person name="Tice H."/>
            <person name="Bruce D."/>
            <person name="Goodwin L."/>
            <person name="Pitluck S."/>
            <person name="Kiss H."/>
            <person name="Chertkov O."/>
            <person name="Monk C."/>
            <person name="Brettin T."/>
            <person name="Detter J.C."/>
            <person name="Han C."/>
            <person name="Kuske C.R."/>
            <person name="Schmutz J."/>
            <person name="Larimer F."/>
            <person name="Land M."/>
            <person name="Hauser L."/>
            <person name="Kyrpides N."/>
            <person name="Mikhailova N."/>
            <person name="Vishnivetskaya T."/>
            <person name="Rodrigues D.F."/>
            <person name="Gilichinsky D."/>
            <person name="Tiedje J."/>
            <person name="Richardson P."/>
        </authorList>
    </citation>
    <scope>NUCLEOTIDE SEQUENCE [LARGE SCALE GENOMIC DNA]</scope>
    <source>
        <strain>DSM 17290 / CCUG 55495 / CIP 109462 / JCM 13490 / 255-15</strain>
    </source>
</reference>
<evidence type="ECO:0000255" key="1">
    <source>
        <dbReference type="HAMAP-Rule" id="MF_00083"/>
    </source>
</evidence>
<dbReference type="EC" id="3.1.1.29" evidence="1"/>
<dbReference type="EMBL" id="CP001022">
    <property type="protein sequence ID" value="ACB59530.1"/>
    <property type="molecule type" value="Genomic_DNA"/>
</dbReference>
<dbReference type="RefSeq" id="WP_012368956.1">
    <property type="nucleotide sequence ID" value="NC_010556.1"/>
</dbReference>
<dbReference type="SMR" id="B1YGP7"/>
<dbReference type="STRING" id="262543.Exig_0043"/>
<dbReference type="KEGG" id="esi:Exig_0043"/>
<dbReference type="eggNOG" id="COG0193">
    <property type="taxonomic scope" value="Bacteria"/>
</dbReference>
<dbReference type="HOGENOM" id="CLU_062456_4_1_9"/>
<dbReference type="OrthoDB" id="9800507at2"/>
<dbReference type="Proteomes" id="UP000001681">
    <property type="component" value="Chromosome"/>
</dbReference>
<dbReference type="GO" id="GO:0005737">
    <property type="term" value="C:cytoplasm"/>
    <property type="evidence" value="ECO:0007669"/>
    <property type="project" value="UniProtKB-SubCell"/>
</dbReference>
<dbReference type="GO" id="GO:0004045">
    <property type="term" value="F:peptidyl-tRNA hydrolase activity"/>
    <property type="evidence" value="ECO:0007669"/>
    <property type="project" value="UniProtKB-UniRule"/>
</dbReference>
<dbReference type="GO" id="GO:0000049">
    <property type="term" value="F:tRNA binding"/>
    <property type="evidence" value="ECO:0007669"/>
    <property type="project" value="UniProtKB-UniRule"/>
</dbReference>
<dbReference type="GO" id="GO:0006515">
    <property type="term" value="P:protein quality control for misfolded or incompletely synthesized proteins"/>
    <property type="evidence" value="ECO:0007669"/>
    <property type="project" value="UniProtKB-UniRule"/>
</dbReference>
<dbReference type="GO" id="GO:0072344">
    <property type="term" value="P:rescue of stalled ribosome"/>
    <property type="evidence" value="ECO:0007669"/>
    <property type="project" value="UniProtKB-UniRule"/>
</dbReference>
<dbReference type="CDD" id="cd00462">
    <property type="entry name" value="PTH"/>
    <property type="match status" value="1"/>
</dbReference>
<dbReference type="FunFam" id="3.40.50.1470:FF:000001">
    <property type="entry name" value="Peptidyl-tRNA hydrolase"/>
    <property type="match status" value="1"/>
</dbReference>
<dbReference type="Gene3D" id="3.40.50.1470">
    <property type="entry name" value="Peptidyl-tRNA hydrolase"/>
    <property type="match status" value="1"/>
</dbReference>
<dbReference type="HAMAP" id="MF_00083">
    <property type="entry name" value="Pept_tRNA_hydro_bact"/>
    <property type="match status" value="1"/>
</dbReference>
<dbReference type="InterPro" id="IPR001328">
    <property type="entry name" value="Pept_tRNA_hydro"/>
</dbReference>
<dbReference type="InterPro" id="IPR018171">
    <property type="entry name" value="Pept_tRNA_hydro_CS"/>
</dbReference>
<dbReference type="InterPro" id="IPR036416">
    <property type="entry name" value="Pept_tRNA_hydro_sf"/>
</dbReference>
<dbReference type="NCBIfam" id="TIGR00447">
    <property type="entry name" value="pth"/>
    <property type="match status" value="1"/>
</dbReference>
<dbReference type="PANTHER" id="PTHR17224">
    <property type="entry name" value="PEPTIDYL-TRNA HYDROLASE"/>
    <property type="match status" value="1"/>
</dbReference>
<dbReference type="PANTHER" id="PTHR17224:SF1">
    <property type="entry name" value="PEPTIDYL-TRNA HYDROLASE"/>
    <property type="match status" value="1"/>
</dbReference>
<dbReference type="Pfam" id="PF01195">
    <property type="entry name" value="Pept_tRNA_hydro"/>
    <property type="match status" value="1"/>
</dbReference>
<dbReference type="SUPFAM" id="SSF53178">
    <property type="entry name" value="Peptidyl-tRNA hydrolase-like"/>
    <property type="match status" value="1"/>
</dbReference>
<dbReference type="PROSITE" id="PS01195">
    <property type="entry name" value="PEPT_TRNA_HYDROL_1"/>
    <property type="match status" value="1"/>
</dbReference>
<dbReference type="PROSITE" id="PS01196">
    <property type="entry name" value="PEPT_TRNA_HYDROL_2"/>
    <property type="match status" value="1"/>
</dbReference>
<gene>
    <name evidence="1" type="primary">pth</name>
    <name type="ordered locus">Exig_0043</name>
</gene>
<sequence>MKCIVGLGNPGAKYTNTRHNIGFLAIDALAKEHGIKLTESKFKAVFGTGMIKGERVVLVKPLTYMNLSGEAVRPLLDFYKIAVEDVLVIYDDLDLPLEKMRLRSKGSAGGHNGVKSLIQHLGTQDIKRLKLGVGRPPAPIQVIDWVLMPFAKSEQTTLQHVLSDSVNIATDFIDTPFLALMNRYN</sequence>
<comment type="function">
    <text evidence="1">Hydrolyzes ribosome-free peptidyl-tRNAs (with 1 or more amino acids incorporated), which drop off the ribosome during protein synthesis, or as a result of ribosome stalling.</text>
</comment>
<comment type="function">
    <text evidence="1">Catalyzes the release of premature peptidyl moieties from peptidyl-tRNA molecules trapped in stalled 50S ribosomal subunits, and thus maintains levels of free tRNAs and 50S ribosomes.</text>
</comment>
<comment type="catalytic activity">
    <reaction evidence="1">
        <text>an N-acyl-L-alpha-aminoacyl-tRNA + H2O = an N-acyl-L-amino acid + a tRNA + H(+)</text>
        <dbReference type="Rhea" id="RHEA:54448"/>
        <dbReference type="Rhea" id="RHEA-COMP:10123"/>
        <dbReference type="Rhea" id="RHEA-COMP:13883"/>
        <dbReference type="ChEBI" id="CHEBI:15377"/>
        <dbReference type="ChEBI" id="CHEBI:15378"/>
        <dbReference type="ChEBI" id="CHEBI:59874"/>
        <dbReference type="ChEBI" id="CHEBI:78442"/>
        <dbReference type="ChEBI" id="CHEBI:138191"/>
        <dbReference type="EC" id="3.1.1.29"/>
    </reaction>
</comment>
<comment type="subunit">
    <text evidence="1">Monomer.</text>
</comment>
<comment type="subcellular location">
    <subcellularLocation>
        <location evidence="1">Cytoplasm</location>
    </subcellularLocation>
</comment>
<comment type="similarity">
    <text evidence="1">Belongs to the PTH family.</text>
</comment>